<reference key="1">
    <citation type="journal article" date="2004" name="Nat. Genet.">
        <title>Comparison of genome degradation in Paratyphi A and Typhi, human-restricted serovars of Salmonella enterica that cause typhoid.</title>
        <authorList>
            <person name="McClelland M."/>
            <person name="Sanderson K.E."/>
            <person name="Clifton S.W."/>
            <person name="Latreille P."/>
            <person name="Porwollik S."/>
            <person name="Sabo A."/>
            <person name="Meyer R."/>
            <person name="Bieri T."/>
            <person name="Ozersky P."/>
            <person name="McLellan M."/>
            <person name="Harkins C.R."/>
            <person name="Wang C."/>
            <person name="Nguyen C."/>
            <person name="Berghoff A."/>
            <person name="Elliott G."/>
            <person name="Kohlberg S."/>
            <person name="Strong C."/>
            <person name="Du F."/>
            <person name="Carter J."/>
            <person name="Kremizki C."/>
            <person name="Layman D."/>
            <person name="Leonard S."/>
            <person name="Sun H."/>
            <person name="Fulton L."/>
            <person name="Nash W."/>
            <person name="Miner T."/>
            <person name="Minx P."/>
            <person name="Delehaunty K."/>
            <person name="Fronick C."/>
            <person name="Magrini V."/>
            <person name="Nhan M."/>
            <person name="Warren W."/>
            <person name="Florea L."/>
            <person name="Spieth J."/>
            <person name="Wilson R.K."/>
        </authorList>
    </citation>
    <scope>NUCLEOTIDE SEQUENCE [LARGE SCALE GENOMIC DNA]</scope>
    <source>
        <strain>ATCC 9150 / SARB42</strain>
    </source>
</reference>
<evidence type="ECO:0000255" key="1">
    <source>
        <dbReference type="HAMAP-Rule" id="MF_00501"/>
    </source>
</evidence>
<evidence type="ECO:0000305" key="2"/>
<name>RL31_SALPA</name>
<sequence length="70" mass="7719">MKKGIHPNYVEITATCSCGNVIKTHSTVGHDLNLDVCGKCHPFFTGKQRVVDTGGRVERFNKRFSIPGSK</sequence>
<protein>
    <recommendedName>
        <fullName evidence="1">Large ribosomal subunit protein bL31</fullName>
    </recommendedName>
    <alternativeName>
        <fullName evidence="2">50S ribosomal protein L31</fullName>
    </alternativeName>
</protein>
<dbReference type="EMBL" id="CP000026">
    <property type="protein sequence ID" value="AAV79703.1"/>
    <property type="molecule type" value="Genomic_DNA"/>
</dbReference>
<dbReference type="RefSeq" id="WP_000715284.1">
    <property type="nucleotide sequence ID" value="NC_006511.1"/>
</dbReference>
<dbReference type="SMR" id="Q5PK51"/>
<dbReference type="GeneID" id="66758349"/>
<dbReference type="KEGG" id="spt:SPA3939"/>
<dbReference type="HOGENOM" id="CLU_114306_4_3_6"/>
<dbReference type="Proteomes" id="UP000008185">
    <property type="component" value="Chromosome"/>
</dbReference>
<dbReference type="GO" id="GO:1990904">
    <property type="term" value="C:ribonucleoprotein complex"/>
    <property type="evidence" value="ECO:0007669"/>
    <property type="project" value="UniProtKB-KW"/>
</dbReference>
<dbReference type="GO" id="GO:0005840">
    <property type="term" value="C:ribosome"/>
    <property type="evidence" value="ECO:0007669"/>
    <property type="project" value="UniProtKB-KW"/>
</dbReference>
<dbReference type="GO" id="GO:0046872">
    <property type="term" value="F:metal ion binding"/>
    <property type="evidence" value="ECO:0007669"/>
    <property type="project" value="UniProtKB-KW"/>
</dbReference>
<dbReference type="GO" id="GO:0019843">
    <property type="term" value="F:rRNA binding"/>
    <property type="evidence" value="ECO:0007669"/>
    <property type="project" value="UniProtKB-KW"/>
</dbReference>
<dbReference type="GO" id="GO:0003735">
    <property type="term" value="F:structural constituent of ribosome"/>
    <property type="evidence" value="ECO:0007669"/>
    <property type="project" value="InterPro"/>
</dbReference>
<dbReference type="GO" id="GO:0006412">
    <property type="term" value="P:translation"/>
    <property type="evidence" value="ECO:0007669"/>
    <property type="project" value="UniProtKB-UniRule"/>
</dbReference>
<dbReference type="FunFam" id="4.10.830.30:FF:000001">
    <property type="entry name" value="50S ribosomal protein L31"/>
    <property type="match status" value="1"/>
</dbReference>
<dbReference type="Gene3D" id="4.10.830.30">
    <property type="entry name" value="Ribosomal protein L31"/>
    <property type="match status" value="1"/>
</dbReference>
<dbReference type="HAMAP" id="MF_00501">
    <property type="entry name" value="Ribosomal_bL31_1"/>
    <property type="match status" value="1"/>
</dbReference>
<dbReference type="InterPro" id="IPR034704">
    <property type="entry name" value="Ribosomal_bL28/bL31-like_sf"/>
</dbReference>
<dbReference type="InterPro" id="IPR002150">
    <property type="entry name" value="Ribosomal_bL31"/>
</dbReference>
<dbReference type="InterPro" id="IPR027491">
    <property type="entry name" value="Ribosomal_bL31_A"/>
</dbReference>
<dbReference type="InterPro" id="IPR042105">
    <property type="entry name" value="Ribosomal_bL31_sf"/>
</dbReference>
<dbReference type="NCBIfam" id="TIGR00105">
    <property type="entry name" value="L31"/>
    <property type="match status" value="1"/>
</dbReference>
<dbReference type="NCBIfam" id="NF000612">
    <property type="entry name" value="PRK00019.1"/>
    <property type="match status" value="1"/>
</dbReference>
<dbReference type="NCBIfam" id="NF001809">
    <property type="entry name" value="PRK00528.1"/>
    <property type="match status" value="1"/>
</dbReference>
<dbReference type="PANTHER" id="PTHR33280">
    <property type="entry name" value="50S RIBOSOMAL PROTEIN L31, CHLOROPLASTIC"/>
    <property type="match status" value="1"/>
</dbReference>
<dbReference type="PANTHER" id="PTHR33280:SF6">
    <property type="entry name" value="LARGE RIBOSOMAL SUBUNIT PROTEIN BL31A"/>
    <property type="match status" value="1"/>
</dbReference>
<dbReference type="Pfam" id="PF01197">
    <property type="entry name" value="Ribosomal_L31"/>
    <property type="match status" value="1"/>
</dbReference>
<dbReference type="PRINTS" id="PR01249">
    <property type="entry name" value="RIBOSOMALL31"/>
</dbReference>
<dbReference type="SUPFAM" id="SSF143800">
    <property type="entry name" value="L28p-like"/>
    <property type="match status" value="1"/>
</dbReference>
<dbReference type="PROSITE" id="PS01143">
    <property type="entry name" value="RIBOSOMAL_L31"/>
    <property type="match status" value="1"/>
</dbReference>
<comment type="function">
    <text evidence="1">Binds the 23S rRNA.</text>
</comment>
<comment type="cofactor">
    <cofactor evidence="1">
        <name>Zn(2+)</name>
        <dbReference type="ChEBI" id="CHEBI:29105"/>
    </cofactor>
    <text evidence="1">Binds 1 zinc ion per subunit.</text>
</comment>
<comment type="subunit">
    <text evidence="1">Part of the 50S ribosomal subunit.</text>
</comment>
<comment type="similarity">
    <text evidence="1">Belongs to the bacterial ribosomal protein bL31 family. Type A subfamily.</text>
</comment>
<keyword id="KW-0479">Metal-binding</keyword>
<keyword id="KW-0687">Ribonucleoprotein</keyword>
<keyword id="KW-0689">Ribosomal protein</keyword>
<keyword id="KW-0694">RNA-binding</keyword>
<keyword id="KW-0699">rRNA-binding</keyword>
<keyword id="KW-0862">Zinc</keyword>
<proteinExistence type="inferred from homology"/>
<feature type="chain" id="PRO_0000173157" description="Large ribosomal subunit protein bL31">
    <location>
        <begin position="1"/>
        <end position="70"/>
    </location>
</feature>
<feature type="binding site" evidence="1">
    <location>
        <position position="16"/>
    </location>
    <ligand>
        <name>Zn(2+)</name>
        <dbReference type="ChEBI" id="CHEBI:29105"/>
    </ligand>
</feature>
<feature type="binding site" evidence="1">
    <location>
        <position position="18"/>
    </location>
    <ligand>
        <name>Zn(2+)</name>
        <dbReference type="ChEBI" id="CHEBI:29105"/>
    </ligand>
</feature>
<feature type="binding site" evidence="1">
    <location>
        <position position="37"/>
    </location>
    <ligand>
        <name>Zn(2+)</name>
        <dbReference type="ChEBI" id="CHEBI:29105"/>
    </ligand>
</feature>
<feature type="binding site" evidence="1">
    <location>
        <position position="40"/>
    </location>
    <ligand>
        <name>Zn(2+)</name>
        <dbReference type="ChEBI" id="CHEBI:29105"/>
    </ligand>
</feature>
<gene>
    <name evidence="1" type="primary">rpmE</name>
    <name type="ordered locus">SPA3939</name>
</gene>
<organism>
    <name type="scientific">Salmonella paratyphi A (strain ATCC 9150 / SARB42)</name>
    <dbReference type="NCBI Taxonomy" id="295319"/>
    <lineage>
        <taxon>Bacteria</taxon>
        <taxon>Pseudomonadati</taxon>
        <taxon>Pseudomonadota</taxon>
        <taxon>Gammaproteobacteria</taxon>
        <taxon>Enterobacterales</taxon>
        <taxon>Enterobacteriaceae</taxon>
        <taxon>Salmonella</taxon>
    </lineage>
</organism>
<accession>Q5PK51</accession>